<proteinExistence type="inferred from homology"/>
<keyword id="KW-0202">Cytokine</keyword>
<keyword id="KW-1015">Disulfide bond</keyword>
<keyword id="KW-0339">Growth factor</keyword>
<keyword id="KW-0395">Inflammatory response</keyword>
<keyword id="KW-1185">Reference proteome</keyword>
<keyword id="KW-0964">Secreted</keyword>
<keyword id="KW-0732">Signal</keyword>
<organism>
    <name type="scientific">Ovis aries</name>
    <name type="common">Sheep</name>
    <dbReference type="NCBI Taxonomy" id="9940"/>
    <lineage>
        <taxon>Eukaryota</taxon>
        <taxon>Metazoa</taxon>
        <taxon>Chordata</taxon>
        <taxon>Craniata</taxon>
        <taxon>Vertebrata</taxon>
        <taxon>Euteleostomi</taxon>
        <taxon>Mammalia</taxon>
        <taxon>Eutheria</taxon>
        <taxon>Laurasiatheria</taxon>
        <taxon>Artiodactyla</taxon>
        <taxon>Ruminantia</taxon>
        <taxon>Pecora</taxon>
        <taxon>Bovidae</taxon>
        <taxon>Caprinae</taxon>
        <taxon>Ovis</taxon>
    </lineage>
</organism>
<evidence type="ECO:0000250" key="1"/>
<evidence type="ECO:0000255" key="2"/>
<evidence type="ECO:0000305" key="3"/>
<accession>O46678</accession>
<gene>
    <name type="primary">CXCL1</name>
    <name type="synonym">GRO</name>
    <name type="synonym">SCYB1</name>
</gene>
<name>GROA_SHEEP</name>
<feature type="signal peptide" evidence="2">
    <location>
        <begin position="1"/>
        <end position="30"/>
    </location>
</feature>
<feature type="chain" id="PRO_0000005057" description="Growth-regulated alpha protein">
    <location>
        <begin position="31"/>
        <end position="103"/>
    </location>
</feature>
<feature type="disulfide bond" evidence="1">
    <location>
        <begin position="39"/>
        <end position="65"/>
    </location>
</feature>
<feature type="disulfide bond" evidence="1">
    <location>
        <begin position="41"/>
        <end position="81"/>
    </location>
</feature>
<reference key="1">
    <citation type="journal article" date="1999" name="Mol. Biol. Evol.">
        <title>Isolation of novel GRO genes and a phylogenetic analysis of the CXC chemokine subfamily in mammals.</title>
        <authorList>
            <person name="Modi W.S."/>
            <person name="Yoshimura T."/>
        </authorList>
    </citation>
    <scope>NUCLEOTIDE SEQUENCE [MRNA]</scope>
</reference>
<sequence length="103" mass="10820">MARAANPAPRLLGAAMLLLLLVAAGRRAAGAPVVNELRCQCLQTVQGIHLKNMQSVKVTPPGPHCGQTEVIATLKTGQEVCLNPAAPMVKKIIDKMLNQASSN</sequence>
<comment type="function">
    <text>Has chemotactic activity for neutrophils.</text>
</comment>
<comment type="subcellular location">
    <subcellularLocation>
        <location>Secreted</location>
    </subcellularLocation>
</comment>
<comment type="similarity">
    <text evidence="3">Belongs to the intercrine alpha (chemokine CxC) family.</text>
</comment>
<dbReference type="EMBL" id="U95814">
    <property type="protein sequence ID" value="AAB93930.1"/>
    <property type="molecule type" value="mRNA"/>
</dbReference>
<dbReference type="RefSeq" id="NP_001009358.1">
    <property type="nucleotide sequence ID" value="NM_001009358.1"/>
</dbReference>
<dbReference type="SMR" id="O46678"/>
<dbReference type="STRING" id="9940.ENSOARP00000015847"/>
<dbReference type="PaxDb" id="9940-ENSOARP00000015847"/>
<dbReference type="Ensembl" id="ENSOART00260013702">
    <property type="protein sequence ID" value="ENSOARP00260006896"/>
    <property type="gene ID" value="ENSOARG00260008482"/>
</dbReference>
<dbReference type="GeneID" id="443380"/>
<dbReference type="KEGG" id="oas:443380"/>
<dbReference type="CTD" id="2919"/>
<dbReference type="eggNOG" id="ENOG502S7MM">
    <property type="taxonomic scope" value="Eukaryota"/>
</dbReference>
<dbReference type="OrthoDB" id="8872899at2759"/>
<dbReference type="Proteomes" id="UP000002356">
    <property type="component" value="Unplaced"/>
</dbReference>
<dbReference type="GO" id="GO:0005615">
    <property type="term" value="C:extracellular space"/>
    <property type="evidence" value="ECO:0007669"/>
    <property type="project" value="UniProtKB-KW"/>
</dbReference>
<dbReference type="GO" id="GO:0008009">
    <property type="term" value="F:chemokine activity"/>
    <property type="evidence" value="ECO:0007669"/>
    <property type="project" value="InterPro"/>
</dbReference>
<dbReference type="GO" id="GO:0008083">
    <property type="term" value="F:growth factor activity"/>
    <property type="evidence" value="ECO:0007669"/>
    <property type="project" value="UniProtKB-KW"/>
</dbReference>
<dbReference type="GO" id="GO:0006955">
    <property type="term" value="P:immune response"/>
    <property type="evidence" value="ECO:0007669"/>
    <property type="project" value="InterPro"/>
</dbReference>
<dbReference type="GO" id="GO:0006954">
    <property type="term" value="P:inflammatory response"/>
    <property type="evidence" value="ECO:0007669"/>
    <property type="project" value="UniProtKB-KW"/>
</dbReference>
<dbReference type="CDD" id="cd00273">
    <property type="entry name" value="Chemokine_CXC"/>
    <property type="match status" value="1"/>
</dbReference>
<dbReference type="FunFam" id="2.40.50.40:FF:000004">
    <property type="entry name" value="C-X-C motif chemokine"/>
    <property type="match status" value="1"/>
</dbReference>
<dbReference type="Gene3D" id="2.40.50.40">
    <property type="match status" value="1"/>
</dbReference>
<dbReference type="InterPro" id="IPR039809">
    <property type="entry name" value="Chemokine_b/g/d"/>
</dbReference>
<dbReference type="InterPro" id="IPR001089">
    <property type="entry name" value="Chemokine_CXC"/>
</dbReference>
<dbReference type="InterPro" id="IPR018048">
    <property type="entry name" value="Chemokine_CXC_CS"/>
</dbReference>
<dbReference type="InterPro" id="IPR001811">
    <property type="entry name" value="Chemokine_IL8-like_dom"/>
</dbReference>
<dbReference type="InterPro" id="IPR033899">
    <property type="entry name" value="CXC_Chemokine_domain"/>
</dbReference>
<dbReference type="InterPro" id="IPR036048">
    <property type="entry name" value="Interleukin_8-like_sf"/>
</dbReference>
<dbReference type="PANTHER" id="PTHR12015:SF192">
    <property type="entry name" value="GROWTH-REGULATED ALPHA PROTEIN"/>
    <property type="match status" value="1"/>
</dbReference>
<dbReference type="PANTHER" id="PTHR12015">
    <property type="entry name" value="SMALL INDUCIBLE CYTOKINE A"/>
    <property type="match status" value="1"/>
</dbReference>
<dbReference type="Pfam" id="PF00048">
    <property type="entry name" value="IL8"/>
    <property type="match status" value="1"/>
</dbReference>
<dbReference type="PRINTS" id="PR00436">
    <property type="entry name" value="INTERLEUKIN8"/>
</dbReference>
<dbReference type="PRINTS" id="PR00437">
    <property type="entry name" value="SMALLCYTKCXC"/>
</dbReference>
<dbReference type="SMART" id="SM00199">
    <property type="entry name" value="SCY"/>
    <property type="match status" value="1"/>
</dbReference>
<dbReference type="SUPFAM" id="SSF54117">
    <property type="entry name" value="Interleukin 8-like chemokines"/>
    <property type="match status" value="1"/>
</dbReference>
<dbReference type="PROSITE" id="PS00471">
    <property type="entry name" value="SMALL_CYTOKINES_CXC"/>
    <property type="match status" value="1"/>
</dbReference>
<protein>
    <recommendedName>
        <fullName>Growth-regulated alpha protein</fullName>
    </recommendedName>
    <alternativeName>
        <fullName>C-X-C motif chemokine 1</fullName>
    </alternativeName>
</protein>